<accession>P0A708</accession>
<accession>P02999</accession>
<accession>P76905</accession>
<comment type="function">
    <text evidence="1">IF-3 binds to the 30S ribosomal subunit and shifts the equilibrium between 70S ribosomes and their 50S and 30S subunits in favor of the free subunits, thus enhancing the availability of 30S subunits on which protein synthesis initiation begins.</text>
</comment>
<comment type="subunit">
    <text evidence="1">Monomer.</text>
</comment>
<comment type="subcellular location">
    <subcellularLocation>
        <location evidence="1">Cytoplasm</location>
    </subcellularLocation>
</comment>
<comment type="similarity">
    <text evidence="1">Belongs to the IF-3 family.</text>
</comment>
<comment type="sequence caution" evidence="2">
    <conflict type="erroneous initiation">
        <sequence resource="EMBL-CDS" id="AAN80574"/>
    </conflict>
</comment>
<name>IF3_ECOL6</name>
<proteinExistence type="inferred from homology"/>
<protein>
    <recommendedName>
        <fullName evidence="1">Translation initiation factor IF-3</fullName>
    </recommendedName>
</protein>
<reference key="1">
    <citation type="journal article" date="2002" name="Proc. Natl. Acad. Sci. U.S.A.">
        <title>Extensive mosaic structure revealed by the complete genome sequence of uropathogenic Escherichia coli.</title>
        <authorList>
            <person name="Welch R.A."/>
            <person name="Burland V."/>
            <person name="Plunkett G. III"/>
            <person name="Redford P."/>
            <person name="Roesch P."/>
            <person name="Rasko D."/>
            <person name="Buckles E.L."/>
            <person name="Liou S.-R."/>
            <person name="Boutin A."/>
            <person name="Hackett J."/>
            <person name="Stroud D."/>
            <person name="Mayhew G.F."/>
            <person name="Rose D.J."/>
            <person name="Zhou S."/>
            <person name="Schwartz D.C."/>
            <person name="Perna N.T."/>
            <person name="Mobley H.L.T."/>
            <person name="Donnenberg M.S."/>
            <person name="Blattner F.R."/>
        </authorList>
    </citation>
    <scope>NUCLEOTIDE SEQUENCE [LARGE SCALE GENOMIC DNA]</scope>
    <source>
        <strain>CFT073 / ATCC 700928 / UPEC</strain>
    </source>
</reference>
<dbReference type="EMBL" id="AE014075">
    <property type="protein sequence ID" value="AAN80574.1"/>
    <property type="status" value="ALT_INIT"/>
    <property type="molecule type" value="Genomic_DNA"/>
</dbReference>
<dbReference type="RefSeq" id="WP_001700733.1">
    <property type="nucleotide sequence ID" value="NZ_CP051263.1"/>
</dbReference>
<dbReference type="BMRB" id="P0A708"/>
<dbReference type="SMR" id="P0A708"/>
<dbReference type="STRING" id="199310.c2115"/>
<dbReference type="GeneID" id="93775931"/>
<dbReference type="KEGG" id="ecc:c2115"/>
<dbReference type="eggNOG" id="COG0290">
    <property type="taxonomic scope" value="Bacteria"/>
</dbReference>
<dbReference type="HOGENOM" id="CLU_054919_3_2_6"/>
<dbReference type="Proteomes" id="UP000001410">
    <property type="component" value="Chromosome"/>
</dbReference>
<dbReference type="GO" id="GO:0005829">
    <property type="term" value="C:cytosol"/>
    <property type="evidence" value="ECO:0007669"/>
    <property type="project" value="TreeGrafter"/>
</dbReference>
<dbReference type="GO" id="GO:0016020">
    <property type="term" value="C:membrane"/>
    <property type="evidence" value="ECO:0007669"/>
    <property type="project" value="TreeGrafter"/>
</dbReference>
<dbReference type="GO" id="GO:0070992">
    <property type="term" value="C:translation initiation complex"/>
    <property type="evidence" value="ECO:0000315"/>
    <property type="project" value="CAFA"/>
</dbReference>
<dbReference type="GO" id="GO:1990856">
    <property type="term" value="F:methionyl-initiator methionine tRNA binding"/>
    <property type="evidence" value="ECO:0000315"/>
    <property type="project" value="CAFA"/>
</dbReference>
<dbReference type="GO" id="GO:0043024">
    <property type="term" value="F:ribosomal small subunit binding"/>
    <property type="evidence" value="ECO:0000315"/>
    <property type="project" value="CAFA"/>
</dbReference>
<dbReference type="GO" id="GO:0003743">
    <property type="term" value="F:translation initiation factor activity"/>
    <property type="evidence" value="ECO:0000315"/>
    <property type="project" value="CAFA"/>
</dbReference>
<dbReference type="GO" id="GO:0001731">
    <property type="term" value="P:formation of translation preinitiation complex"/>
    <property type="evidence" value="ECO:0000315"/>
    <property type="project" value="CAFA"/>
</dbReference>
<dbReference type="GO" id="GO:1901195">
    <property type="term" value="P:positive regulation of formation of translation preinitiation complex"/>
    <property type="evidence" value="ECO:0000315"/>
    <property type="project" value="CAFA"/>
</dbReference>
<dbReference type="GO" id="GO:0032790">
    <property type="term" value="P:ribosome disassembly"/>
    <property type="evidence" value="ECO:0000315"/>
    <property type="project" value="CAFA"/>
</dbReference>
<dbReference type="GO" id="GO:0006413">
    <property type="term" value="P:translational initiation"/>
    <property type="evidence" value="ECO:0000315"/>
    <property type="project" value="CAFA"/>
</dbReference>
<dbReference type="FunFam" id="3.10.20.80:FF:000001">
    <property type="entry name" value="Translation initiation factor IF-3"/>
    <property type="match status" value="1"/>
</dbReference>
<dbReference type="FunFam" id="3.30.110.10:FF:000001">
    <property type="entry name" value="Translation initiation factor IF-3"/>
    <property type="match status" value="1"/>
</dbReference>
<dbReference type="Gene3D" id="3.30.110.10">
    <property type="entry name" value="Translation initiation factor 3 (IF-3), C-terminal domain"/>
    <property type="match status" value="1"/>
</dbReference>
<dbReference type="Gene3D" id="3.10.20.80">
    <property type="entry name" value="Translation initiation factor 3 (IF-3), N-terminal domain"/>
    <property type="match status" value="1"/>
</dbReference>
<dbReference type="HAMAP" id="MF_00080">
    <property type="entry name" value="IF_3"/>
    <property type="match status" value="1"/>
</dbReference>
<dbReference type="InterPro" id="IPR036788">
    <property type="entry name" value="T_IF-3_C_sf"/>
</dbReference>
<dbReference type="InterPro" id="IPR036787">
    <property type="entry name" value="T_IF-3_N_sf"/>
</dbReference>
<dbReference type="InterPro" id="IPR019813">
    <property type="entry name" value="Translation_initiation_fac3_CS"/>
</dbReference>
<dbReference type="InterPro" id="IPR001288">
    <property type="entry name" value="Translation_initiation_fac_3"/>
</dbReference>
<dbReference type="InterPro" id="IPR019815">
    <property type="entry name" value="Translation_initiation_fac_3_C"/>
</dbReference>
<dbReference type="InterPro" id="IPR019814">
    <property type="entry name" value="Translation_initiation_fac_3_N"/>
</dbReference>
<dbReference type="NCBIfam" id="TIGR00168">
    <property type="entry name" value="infC"/>
    <property type="match status" value="1"/>
</dbReference>
<dbReference type="PANTHER" id="PTHR10938">
    <property type="entry name" value="TRANSLATION INITIATION FACTOR IF-3"/>
    <property type="match status" value="1"/>
</dbReference>
<dbReference type="PANTHER" id="PTHR10938:SF0">
    <property type="entry name" value="TRANSLATION INITIATION FACTOR IF-3, MITOCHONDRIAL"/>
    <property type="match status" value="1"/>
</dbReference>
<dbReference type="Pfam" id="PF00707">
    <property type="entry name" value="IF3_C"/>
    <property type="match status" value="1"/>
</dbReference>
<dbReference type="Pfam" id="PF05198">
    <property type="entry name" value="IF3_N"/>
    <property type="match status" value="1"/>
</dbReference>
<dbReference type="SUPFAM" id="SSF55200">
    <property type="entry name" value="Translation initiation factor IF3, C-terminal domain"/>
    <property type="match status" value="1"/>
</dbReference>
<dbReference type="SUPFAM" id="SSF54364">
    <property type="entry name" value="Translation initiation factor IF3, N-terminal domain"/>
    <property type="match status" value="1"/>
</dbReference>
<dbReference type="PROSITE" id="PS00938">
    <property type="entry name" value="IF3"/>
    <property type="match status" value="1"/>
</dbReference>
<sequence>MKGGKRVQTARPNRINGEIRAQEVRLTGLEGEQLGIVSLREALEKAEEAGVDLVEISPNAEPPVCRIMDYGKFLYEKSKSSKEQKKKQKVIQVKEIKFRPGTDEGDYQVKLRSLIRFLEEGDKAKITLRFRGREMAHQQIGMEVLNRVKDDLQELAVVESFPTKIEGRQMIMVLAPKKKQ</sequence>
<organism>
    <name type="scientific">Escherichia coli O6:H1 (strain CFT073 / ATCC 700928 / UPEC)</name>
    <dbReference type="NCBI Taxonomy" id="199310"/>
    <lineage>
        <taxon>Bacteria</taxon>
        <taxon>Pseudomonadati</taxon>
        <taxon>Pseudomonadota</taxon>
        <taxon>Gammaproteobacteria</taxon>
        <taxon>Enterobacterales</taxon>
        <taxon>Enterobacteriaceae</taxon>
        <taxon>Escherichia</taxon>
    </lineage>
</organism>
<keyword id="KW-0963">Cytoplasm</keyword>
<keyword id="KW-0396">Initiation factor</keyword>
<keyword id="KW-0648">Protein biosynthesis</keyword>
<keyword id="KW-1185">Reference proteome</keyword>
<gene>
    <name evidence="1" type="primary">infC</name>
    <name type="ordered locus">c2115</name>
</gene>
<feature type="chain" id="PRO_0000177516" description="Translation initiation factor IF-3">
    <location>
        <begin position="1"/>
        <end position="180"/>
    </location>
</feature>
<evidence type="ECO:0000255" key="1">
    <source>
        <dbReference type="HAMAP-Rule" id="MF_00080"/>
    </source>
</evidence>
<evidence type="ECO:0000305" key="2"/>